<evidence type="ECO:0000255" key="1"/>
<evidence type="ECO:0000255" key="2">
    <source>
        <dbReference type="PROSITE-ProRule" id="PRU00521"/>
    </source>
</evidence>
<evidence type="ECO:0000256" key="3">
    <source>
        <dbReference type="SAM" id="MobiDB-lite"/>
    </source>
</evidence>
<feature type="chain" id="PRO_0000069902" description="Neuromedin-K receptor">
    <location>
        <begin position="1"/>
        <end position="452"/>
    </location>
</feature>
<feature type="topological domain" description="Extracellular" evidence="1">
    <location>
        <begin position="1"/>
        <end position="71"/>
    </location>
</feature>
<feature type="transmembrane region" description="Helical; Name=1" evidence="1">
    <location>
        <begin position="72"/>
        <end position="94"/>
    </location>
</feature>
<feature type="topological domain" description="Cytoplasmic" evidence="1">
    <location>
        <begin position="95"/>
        <end position="104"/>
    </location>
</feature>
<feature type="transmembrane region" description="Helical; Name=2" evidence="1">
    <location>
        <begin position="105"/>
        <end position="126"/>
    </location>
</feature>
<feature type="topological domain" description="Extracellular" evidence="1">
    <location>
        <begin position="127"/>
        <end position="146"/>
    </location>
</feature>
<feature type="transmembrane region" description="Helical; Name=3" evidence="1">
    <location>
        <begin position="147"/>
        <end position="168"/>
    </location>
</feature>
<feature type="topological domain" description="Cytoplasmic" evidence="1">
    <location>
        <begin position="169"/>
        <end position="188"/>
    </location>
</feature>
<feature type="transmembrane region" description="Helical; Name=4" evidence="1">
    <location>
        <begin position="189"/>
        <end position="209"/>
    </location>
</feature>
<feature type="topological domain" description="Extracellular" evidence="1">
    <location>
        <begin position="210"/>
        <end position="232"/>
    </location>
</feature>
<feature type="transmembrane region" description="Helical; Name=5" evidence="1">
    <location>
        <begin position="233"/>
        <end position="257"/>
    </location>
</feature>
<feature type="topological domain" description="Cytoplasmic" evidence="1">
    <location>
        <begin position="258"/>
        <end position="286"/>
    </location>
</feature>
<feature type="transmembrane region" description="Helical; Name=6" evidence="1">
    <location>
        <begin position="287"/>
        <end position="308"/>
    </location>
</feature>
<feature type="topological domain" description="Extracellular" evidence="1">
    <location>
        <begin position="309"/>
        <end position="321"/>
    </location>
</feature>
<feature type="transmembrane region" description="Helical; Name=7" evidence="1">
    <location>
        <begin position="322"/>
        <end position="346"/>
    </location>
</feature>
<feature type="topological domain" description="Cytoplasmic" evidence="1">
    <location>
        <begin position="347"/>
        <end position="452"/>
    </location>
</feature>
<feature type="region of interest" description="Disordered" evidence="3">
    <location>
        <begin position="400"/>
        <end position="452"/>
    </location>
</feature>
<feature type="compositionally biased region" description="Low complexity" evidence="3">
    <location>
        <begin position="432"/>
        <end position="452"/>
    </location>
</feature>
<feature type="lipid moiety-binding region" description="S-palmitoyl cysteine" evidence="1">
    <location>
        <position position="361"/>
    </location>
</feature>
<feature type="glycosylation site" description="N-linked (GlcNAc...) asparagine" evidence="1">
    <location>
        <position position="9"/>
    </location>
</feature>
<feature type="glycosylation site" description="N-linked (GlcNAc...) asparagine" evidence="1">
    <location>
        <position position="23"/>
    </location>
</feature>
<feature type="glycosylation site" description="N-linked (GlcNAc...) asparagine" evidence="1">
    <location>
        <position position="40"/>
    </location>
</feature>
<feature type="glycosylation site" description="N-linked (GlcNAc...) asparagine" evidence="1">
    <location>
        <position position="60"/>
    </location>
</feature>
<feature type="disulfide bond" evidence="2">
    <location>
        <begin position="145"/>
        <end position="220"/>
    </location>
</feature>
<reference key="1">
    <citation type="journal article" date="1990" name="J. Biol. Chem.">
        <title>Cloning and expression of a rat neuromedin K receptor cDNA.</title>
        <authorList>
            <person name="Shigemoto R."/>
            <person name="Yokota Y."/>
            <person name="Tsuchida K."/>
            <person name="Nakanishi S."/>
        </authorList>
    </citation>
    <scope>NUCLEOTIDE SEQUENCE [MRNA]</scope>
    <source>
        <tissue>Brain</tissue>
    </source>
</reference>
<keyword id="KW-1003">Cell membrane</keyword>
<keyword id="KW-1015">Disulfide bond</keyword>
<keyword id="KW-0297">G-protein coupled receptor</keyword>
<keyword id="KW-0325">Glycoprotein</keyword>
<keyword id="KW-0449">Lipoprotein</keyword>
<keyword id="KW-0472">Membrane</keyword>
<keyword id="KW-0564">Palmitate</keyword>
<keyword id="KW-0675">Receptor</keyword>
<keyword id="KW-1185">Reference proteome</keyword>
<keyword id="KW-0807">Transducer</keyword>
<keyword id="KW-0812">Transmembrane</keyword>
<keyword id="KW-1133">Transmembrane helix</keyword>
<protein>
    <recommendedName>
        <fullName>Neuromedin-K receptor</fullName>
        <shortName>NKR</shortName>
    </recommendedName>
    <alternativeName>
        <fullName>NK-3 receptor</fullName>
        <shortName>NK-3R</shortName>
    </alternativeName>
    <alternativeName>
        <fullName>Neurokinin B receptor</fullName>
    </alternativeName>
    <alternativeName>
        <fullName>Tachykinin receptor 3</fullName>
    </alternativeName>
</protein>
<gene>
    <name type="primary">Tacr3</name>
    <name type="synonym">Tac3r</name>
</gene>
<dbReference type="EMBL" id="J05189">
    <property type="protein sequence ID" value="AAA41688.1"/>
    <property type="molecule type" value="mRNA"/>
</dbReference>
<dbReference type="PIR" id="A34916">
    <property type="entry name" value="A34916"/>
</dbReference>
<dbReference type="RefSeq" id="NP_058749.1">
    <property type="nucleotide sequence ID" value="NM_017053.1"/>
</dbReference>
<dbReference type="SMR" id="P16177"/>
<dbReference type="CORUM" id="P16177"/>
<dbReference type="FunCoup" id="P16177">
    <property type="interactions" value="124"/>
</dbReference>
<dbReference type="STRING" id="10116.ENSRNOP00000012473"/>
<dbReference type="BindingDB" id="P16177"/>
<dbReference type="ChEMBL" id="CHEMBL3154"/>
<dbReference type="GuidetoPHARMACOLOGY" id="362"/>
<dbReference type="GlyCosmos" id="P16177">
    <property type="glycosylation" value="4 sites, No reported glycans"/>
</dbReference>
<dbReference type="GlyGen" id="P16177">
    <property type="glycosylation" value="4 sites"/>
</dbReference>
<dbReference type="PhosphoSitePlus" id="P16177"/>
<dbReference type="PaxDb" id="10116-ENSRNOP00000012473"/>
<dbReference type="Ensembl" id="ENSRNOT00000012473.3">
    <property type="protein sequence ID" value="ENSRNOP00000012473.2"/>
    <property type="gene ID" value="ENSRNOG00000009372.3"/>
</dbReference>
<dbReference type="GeneID" id="24808"/>
<dbReference type="KEGG" id="rno:24808"/>
<dbReference type="AGR" id="RGD:3810"/>
<dbReference type="CTD" id="6870"/>
<dbReference type="RGD" id="3810">
    <property type="gene designation" value="Tacr3"/>
</dbReference>
<dbReference type="eggNOG" id="KOG4219">
    <property type="taxonomic scope" value="Eukaryota"/>
</dbReference>
<dbReference type="GeneTree" id="ENSGT00940000153745"/>
<dbReference type="HOGENOM" id="CLU_009579_6_1_1"/>
<dbReference type="InParanoid" id="P16177"/>
<dbReference type="OMA" id="PQCLYSI"/>
<dbReference type="OrthoDB" id="5981855at2759"/>
<dbReference type="PhylomeDB" id="P16177"/>
<dbReference type="TreeFam" id="TF315303"/>
<dbReference type="Reactome" id="R-RNO-380095">
    <property type="pathway name" value="Tachykinin receptors bind tachykinins"/>
</dbReference>
<dbReference type="Reactome" id="R-RNO-416476">
    <property type="pathway name" value="G alpha (q) signalling events"/>
</dbReference>
<dbReference type="PRO" id="PR:P16177"/>
<dbReference type="Proteomes" id="UP000002494">
    <property type="component" value="Chromosome 2"/>
</dbReference>
<dbReference type="Bgee" id="ENSRNOG00000009372">
    <property type="expression patterns" value="Expressed in frontal cortex and 7 other cell types or tissues"/>
</dbReference>
<dbReference type="GO" id="GO:0032590">
    <property type="term" value="C:dendrite membrane"/>
    <property type="evidence" value="ECO:0000314"/>
    <property type="project" value="RGD"/>
</dbReference>
<dbReference type="GO" id="GO:0032809">
    <property type="term" value="C:neuronal cell body membrane"/>
    <property type="evidence" value="ECO:0000314"/>
    <property type="project" value="RGD"/>
</dbReference>
<dbReference type="GO" id="GO:0005886">
    <property type="term" value="C:plasma membrane"/>
    <property type="evidence" value="ECO:0000318"/>
    <property type="project" value="GO_Central"/>
</dbReference>
<dbReference type="GO" id="GO:0097225">
    <property type="term" value="C:sperm midpiece"/>
    <property type="evidence" value="ECO:0000266"/>
    <property type="project" value="RGD"/>
</dbReference>
<dbReference type="GO" id="GO:0004995">
    <property type="term" value="F:tachykinin receptor activity"/>
    <property type="evidence" value="ECO:0000314"/>
    <property type="project" value="RGD"/>
</dbReference>
<dbReference type="GO" id="GO:0045777">
    <property type="term" value="P:positive regulation of blood pressure"/>
    <property type="evidence" value="ECO:0000314"/>
    <property type="project" value="RGD"/>
</dbReference>
<dbReference type="GO" id="GO:1902093">
    <property type="term" value="P:positive regulation of flagellated sperm motility"/>
    <property type="evidence" value="ECO:0000266"/>
    <property type="project" value="RGD"/>
</dbReference>
<dbReference type="GO" id="GO:0010460">
    <property type="term" value="P:positive regulation of heart rate"/>
    <property type="evidence" value="ECO:0000314"/>
    <property type="project" value="RGD"/>
</dbReference>
<dbReference type="GO" id="GO:0070474">
    <property type="term" value="P:positive regulation of uterine smooth muscle contraction"/>
    <property type="evidence" value="ECO:0000314"/>
    <property type="project" value="RGD"/>
</dbReference>
<dbReference type="GO" id="GO:0042053">
    <property type="term" value="P:regulation of dopamine metabolic process"/>
    <property type="evidence" value="ECO:0000314"/>
    <property type="project" value="RGD"/>
</dbReference>
<dbReference type="GO" id="GO:0060259">
    <property type="term" value="P:regulation of feeding behavior"/>
    <property type="evidence" value="ECO:0000314"/>
    <property type="project" value="RGD"/>
</dbReference>
<dbReference type="GO" id="GO:0042220">
    <property type="term" value="P:response to cocaine"/>
    <property type="evidence" value="ECO:0000315"/>
    <property type="project" value="RGD"/>
</dbReference>
<dbReference type="GO" id="GO:0032355">
    <property type="term" value="P:response to estradiol"/>
    <property type="evidence" value="ECO:0000314"/>
    <property type="project" value="RGD"/>
</dbReference>
<dbReference type="CDD" id="cd16003">
    <property type="entry name" value="7tmA_NKR_NK3R"/>
    <property type="match status" value="1"/>
</dbReference>
<dbReference type="FunFam" id="1.20.1070.10:FF:000078">
    <property type="entry name" value="Neuromedin-K receptor"/>
    <property type="match status" value="1"/>
</dbReference>
<dbReference type="Gene3D" id="1.20.1070.10">
    <property type="entry name" value="Rhodopsin 7-helix transmembrane proteins"/>
    <property type="match status" value="1"/>
</dbReference>
<dbReference type="InterPro" id="IPR000276">
    <property type="entry name" value="GPCR_Rhodpsn"/>
</dbReference>
<dbReference type="InterPro" id="IPR017452">
    <property type="entry name" value="GPCR_Rhodpsn_7TM"/>
</dbReference>
<dbReference type="InterPro" id="IPR001681">
    <property type="entry name" value="Neurokn_rcpt"/>
</dbReference>
<dbReference type="InterPro" id="IPR001013">
    <property type="entry name" value="NK3_rcpt"/>
</dbReference>
<dbReference type="PANTHER" id="PTHR46925">
    <property type="entry name" value="G-PROTEIN COUPLED RECEPTOR TKR-1-RELATED"/>
    <property type="match status" value="1"/>
</dbReference>
<dbReference type="PANTHER" id="PTHR46925:SF1">
    <property type="entry name" value="NEUROMEDIN-K RECEPTOR"/>
    <property type="match status" value="1"/>
</dbReference>
<dbReference type="Pfam" id="PF00001">
    <property type="entry name" value="7tm_1"/>
    <property type="match status" value="1"/>
</dbReference>
<dbReference type="PRINTS" id="PR00237">
    <property type="entry name" value="GPCRRHODOPSN"/>
</dbReference>
<dbReference type="PRINTS" id="PR01026">
    <property type="entry name" value="NEUROKININ3R"/>
</dbReference>
<dbReference type="PRINTS" id="PR00244">
    <property type="entry name" value="NEUROKININR"/>
</dbReference>
<dbReference type="SMART" id="SM01381">
    <property type="entry name" value="7TM_GPCR_Srsx"/>
    <property type="match status" value="1"/>
</dbReference>
<dbReference type="SUPFAM" id="SSF81321">
    <property type="entry name" value="Family A G protein-coupled receptor-like"/>
    <property type="match status" value="1"/>
</dbReference>
<dbReference type="PROSITE" id="PS00237">
    <property type="entry name" value="G_PROTEIN_RECEP_F1_1"/>
    <property type="match status" value="1"/>
</dbReference>
<dbReference type="PROSITE" id="PS50262">
    <property type="entry name" value="G_PROTEIN_RECEP_F1_2"/>
    <property type="match status" value="1"/>
</dbReference>
<comment type="function">
    <text>This is a receptor for the tachykinin neuropeptide neuromedin-K (neurokinin B). It is associated with G proteins that activate a phosphatidylinositol-calcium second messenger system. The rank order of affinity of this receptor to tachykinins is: neuromedin-K &gt; substance K &gt; substance P.</text>
</comment>
<comment type="subcellular location">
    <subcellularLocation>
        <location>Cell membrane</location>
        <topology>Multi-pass membrane protein</topology>
    </subcellularLocation>
</comment>
<comment type="PTM">
    <text>The anchoring of this receptor to the plasma membrane is probably mediated by the palmitoylation of a cysteine residue.</text>
</comment>
<comment type="similarity">
    <text evidence="2">Belongs to the G-protein coupled receptor 1 family.</text>
</comment>
<name>NK3R_RAT</name>
<sequence>MASVPRGENWTDGTVEVGTHTGNLSSALGVTEWLALQAGNFSSALGLPATTQAPSQVRANLTNQFVQPSWRIALWSLAYGLVVAVAVFGNLIVIWIILAHKRMRTVTNYFLVNLAFSDASVAAFNTLINFIYGLHSEWYFGANYCRFQNFFPITAVFASIYSMTAIAVDRYMAIIDPLKPRLSATATKIVIGSIWILAFLLAFPQCLYSKIKVMPGRTLCYVQWPEGPKQHFTYHIIVIILVYCFPLLIMGVTYTIVGITLWGGEIPGDTCDKYHEQLKAKRKVVKMMIIVVVTFAICWLPYHVYFILTAIYQQLNRWKYIQQVYLASFWLAMSSTMYNPIIYCCLNKRFRAGFKRAFRWCPFIQVSSYDELELKTTRFHPTRQSSLYTVSRMESVTVLFDPNDGDPTKSSRKKRAVPRDPSANGCSHRGSKSASTTSSFISSPYTSVDEYS</sequence>
<organism>
    <name type="scientific">Rattus norvegicus</name>
    <name type="common">Rat</name>
    <dbReference type="NCBI Taxonomy" id="10116"/>
    <lineage>
        <taxon>Eukaryota</taxon>
        <taxon>Metazoa</taxon>
        <taxon>Chordata</taxon>
        <taxon>Craniata</taxon>
        <taxon>Vertebrata</taxon>
        <taxon>Euteleostomi</taxon>
        <taxon>Mammalia</taxon>
        <taxon>Eutheria</taxon>
        <taxon>Euarchontoglires</taxon>
        <taxon>Glires</taxon>
        <taxon>Rodentia</taxon>
        <taxon>Myomorpha</taxon>
        <taxon>Muroidea</taxon>
        <taxon>Muridae</taxon>
        <taxon>Murinae</taxon>
        <taxon>Rattus</taxon>
    </lineage>
</organism>
<accession>P16177</accession>
<proteinExistence type="evidence at transcript level"/>